<organism>
    <name type="scientific">Gallus gallus</name>
    <name type="common">Chicken</name>
    <dbReference type="NCBI Taxonomy" id="9031"/>
    <lineage>
        <taxon>Eukaryota</taxon>
        <taxon>Metazoa</taxon>
        <taxon>Chordata</taxon>
        <taxon>Craniata</taxon>
        <taxon>Vertebrata</taxon>
        <taxon>Euteleostomi</taxon>
        <taxon>Archelosauria</taxon>
        <taxon>Archosauria</taxon>
        <taxon>Dinosauria</taxon>
        <taxon>Saurischia</taxon>
        <taxon>Theropoda</taxon>
        <taxon>Coelurosauria</taxon>
        <taxon>Aves</taxon>
        <taxon>Neognathae</taxon>
        <taxon>Galloanserae</taxon>
        <taxon>Galliformes</taxon>
        <taxon>Phasianidae</taxon>
        <taxon>Phasianinae</taxon>
        <taxon>Gallus</taxon>
    </lineage>
</organism>
<reference evidence="5" key="1">
    <citation type="journal article" date="2004" name="Comp. Biochem. Physiol.">
        <title>Adenosine deaminase 2 from chicken liver: purification, characterization, and N-terminal amino acid sequence.</title>
        <authorList>
            <person name="Iwaki-Egawa S."/>
            <person name="Namiki C."/>
            <person name="Watanabe Y."/>
        </authorList>
    </citation>
    <scope>PROTEIN SEQUENCE</scope>
    <scope>CATALYTIC ACTIVITY</scope>
    <scope>ACTIVITY REGULATION</scope>
    <scope>BIOPHYSICOCHEMICAL PROPERTIES</scope>
    <scope>SUBUNIT</scope>
    <scope>GLYCOSYLATION</scope>
    <source>
        <tissue evidence="3">Liver</tissue>
    </source>
</reference>
<sequence>TPLWSLMQDLMM</sequence>
<comment type="function">
    <text evidence="1">Catalyzes the hydrolytic deamination of adenosine and 2-deoxyadenosine. Plays an important role in purine metabolism and in adenosine homeostasis. Modulates signaling by extracellular adenosine, and so contributes indirectly to cellular signaling events (By similarity).</text>
</comment>
<comment type="catalytic activity">
    <reaction evidence="2 3">
        <text>adenosine + H2O + H(+) = inosine + NH4(+)</text>
        <dbReference type="Rhea" id="RHEA:24408"/>
        <dbReference type="ChEBI" id="CHEBI:15377"/>
        <dbReference type="ChEBI" id="CHEBI:15378"/>
        <dbReference type="ChEBI" id="CHEBI:16335"/>
        <dbReference type="ChEBI" id="CHEBI:17596"/>
        <dbReference type="ChEBI" id="CHEBI:28938"/>
        <dbReference type="EC" id="3.5.4.4"/>
    </reaction>
</comment>
<comment type="cofactor">
    <cofactor evidence="1">
        <name>Zn(2+)</name>
        <dbReference type="ChEBI" id="CHEBI:29105"/>
    </cofactor>
    <text evidence="1">Binds 1 zinc ion per subunit.</text>
</comment>
<comment type="activity regulation">
    <text evidence="3">Inhibited by adenosine deaminase inhibitor 2-DCF, but not by adenosine deaminase 1 inhibitor EHNA.</text>
</comment>
<comment type="biophysicochemical properties">
    <kinetics>
        <KM evidence="3">144 uM for adenosine</KM>
        <KM evidence="3">333 uM for 2-deoxyadenosine</KM>
    </kinetics>
    <phDependence>
        <text evidence="3">Optimum pH is 6.5.</text>
    </phDependence>
</comment>
<comment type="subunit">
    <text evidence="3">Homodimer.</text>
</comment>
<comment type="PTM">
    <text evidence="3">N-glycosylated.</text>
</comment>
<comment type="similarity">
    <text evidence="4">Belongs to the metallo-dependent hydrolases superfamily. Adenosine and AMP deaminases family.</text>
</comment>
<accession>P84520</accession>
<gene>
    <name type="primary">ADA2</name>
</gene>
<dbReference type="EC" id="3.5.4.4"/>
<dbReference type="InParanoid" id="P84520"/>
<dbReference type="SABIO-RK" id="P84520"/>
<dbReference type="Proteomes" id="UP000000539">
    <property type="component" value="Unassembled WGS sequence"/>
</dbReference>
<dbReference type="GO" id="GO:0004000">
    <property type="term" value="F:adenosine deaminase activity"/>
    <property type="evidence" value="ECO:0007669"/>
    <property type="project" value="RHEA"/>
</dbReference>
<dbReference type="GO" id="GO:0009117">
    <property type="term" value="P:nucleotide metabolic process"/>
    <property type="evidence" value="ECO:0007669"/>
    <property type="project" value="UniProtKB-KW"/>
</dbReference>
<keyword id="KW-0903">Direct protein sequencing</keyword>
<keyword id="KW-0325">Glycoprotein</keyword>
<keyword id="KW-0378">Hydrolase</keyword>
<keyword id="KW-0546">Nucleotide metabolism</keyword>
<keyword id="KW-1185">Reference proteome</keyword>
<name>ADA2_CHICK</name>
<proteinExistence type="evidence at protein level"/>
<protein>
    <recommendedName>
        <fullName>Adenosine deaminase 2</fullName>
        <ecNumber>3.5.4.4</ecNumber>
    </recommendedName>
</protein>
<feature type="chain" id="PRO_0000194359" description="Adenosine deaminase 2">
    <location>
        <begin position="1"/>
        <end position="12" status="greater than"/>
    </location>
</feature>
<feature type="non-terminal residue" evidence="4">
    <location>
        <position position="12"/>
    </location>
</feature>
<evidence type="ECO:0000250" key="1"/>
<evidence type="ECO:0000255" key="2">
    <source>
        <dbReference type="PROSITE-ProRule" id="PRU10104"/>
    </source>
</evidence>
<evidence type="ECO:0000269" key="3">
    <source>
    </source>
</evidence>
<evidence type="ECO:0000303" key="4">
    <source>
    </source>
</evidence>
<evidence type="ECO:0000305" key="5"/>